<evidence type="ECO:0000250" key="1">
    <source>
        <dbReference type="UniProtKB" id="Q3UMR0"/>
    </source>
</evidence>
<evidence type="ECO:0000255" key="2">
    <source>
        <dbReference type="PROSITE-ProRule" id="PRU00550"/>
    </source>
</evidence>
<evidence type="ECO:0000256" key="3">
    <source>
        <dbReference type="SAM" id="MobiDB-lite"/>
    </source>
</evidence>
<evidence type="ECO:0000269" key="4">
    <source>
    </source>
</evidence>
<evidence type="ECO:0000269" key="5">
    <source>
    </source>
</evidence>
<evidence type="ECO:0000269" key="6">
    <source>
    </source>
</evidence>
<evidence type="ECO:0000269" key="7">
    <source>
    </source>
</evidence>
<evidence type="ECO:0000269" key="8">
    <source>
    </source>
</evidence>
<evidence type="ECO:0000269" key="9">
    <source>
    </source>
</evidence>
<evidence type="ECO:0000269" key="10">
    <source>
    </source>
</evidence>
<evidence type="ECO:0000269" key="11">
    <source>
    </source>
</evidence>
<evidence type="ECO:0000305" key="12"/>
<evidence type="ECO:0000305" key="13">
    <source>
    </source>
</evidence>
<evidence type="ECO:0000305" key="14">
    <source>
    </source>
</evidence>
<evidence type="ECO:0000305" key="15">
    <source>
    </source>
</evidence>
<evidence type="ECO:0007744" key="16">
    <source>
    </source>
</evidence>
<evidence type="ECO:0007744" key="17">
    <source>
    </source>
</evidence>
<evidence type="ECO:0007829" key="18">
    <source>
        <dbReference type="PDB" id="4B93"/>
    </source>
</evidence>
<evidence type="ECO:0007829" key="19">
    <source>
        <dbReference type="PDB" id="4CYM"/>
    </source>
</evidence>
<evidence type="ECO:0007829" key="20">
    <source>
        <dbReference type="PDB" id="6TL0"/>
    </source>
</evidence>
<feature type="chain" id="PRO_0000274556" description="Ankyrin repeat domain-containing protein 27">
    <location>
        <begin position="1"/>
        <end position="1050"/>
    </location>
</feature>
<feature type="domain" description="VPS9" evidence="2">
    <location>
        <begin position="233"/>
        <end position="371"/>
    </location>
</feature>
<feature type="repeat" description="ANK 1">
    <location>
        <begin position="396"/>
        <end position="426"/>
    </location>
</feature>
<feature type="repeat" description="ANK 2">
    <location>
        <begin position="462"/>
        <end position="491"/>
    </location>
</feature>
<feature type="repeat" description="ANK 3">
    <location>
        <begin position="495"/>
        <end position="524"/>
    </location>
</feature>
<feature type="repeat" description="ANK 4">
    <location>
        <begin position="528"/>
        <end position="560"/>
    </location>
</feature>
<feature type="repeat" description="ANK 5">
    <location>
        <begin position="564"/>
        <end position="593"/>
    </location>
</feature>
<feature type="repeat" description="ANK 6">
    <location>
        <begin position="597"/>
        <end position="627"/>
    </location>
</feature>
<feature type="repeat" description="ANK 7">
    <location>
        <begin position="668"/>
        <end position="698"/>
    </location>
</feature>
<feature type="repeat" description="ANK 8">
    <location>
        <begin position="743"/>
        <end position="772"/>
    </location>
</feature>
<feature type="repeat" description="ANK 9">
    <location>
        <begin position="776"/>
        <end position="805"/>
    </location>
</feature>
<feature type="repeat" description="ANK 10">
    <location>
        <begin position="809"/>
        <end position="838"/>
    </location>
</feature>
<feature type="repeat" description="ANK 11">
    <location>
        <begin position="842"/>
        <end position="871"/>
    </location>
</feature>
<feature type="region of interest" description="Sufficient for GEF activity towards RAB21" evidence="5">
    <location>
        <begin position="1"/>
        <end position="372"/>
    </location>
</feature>
<feature type="region of interest" description="Sufficient for interaction with VPS29" evidence="11">
    <location>
        <begin position="396"/>
        <end position="460"/>
    </location>
</feature>
<feature type="region of interest" description="Interaction with RAB32" evidence="1">
    <location>
        <begin position="451"/>
        <end position="730"/>
    </location>
</feature>
<feature type="region of interest" description="Interaction with RAB38" evidence="1 6">
    <location>
        <begin position="451"/>
        <end position="600"/>
    </location>
</feature>
<feature type="region of interest" description="Disordered" evidence="3">
    <location>
        <begin position="625"/>
        <end position="665"/>
    </location>
</feature>
<feature type="region of interest" description="Required for interaction with VAMP7" evidence="1 7 10">
    <location>
        <begin position="658"/>
        <end position="707"/>
    </location>
</feature>
<feature type="region of interest" description="Sufficient for interaction with VPS29" evidence="11">
    <location>
        <begin position="692"/>
        <end position="746"/>
    </location>
</feature>
<feature type="region of interest" description="Disordered" evidence="3">
    <location>
        <begin position="987"/>
        <end position="1050"/>
    </location>
</feature>
<feature type="compositionally biased region" description="Polar residues" evidence="3">
    <location>
        <begin position="628"/>
        <end position="637"/>
    </location>
</feature>
<feature type="compositionally biased region" description="Low complexity" evidence="3">
    <location>
        <begin position="638"/>
        <end position="658"/>
    </location>
</feature>
<feature type="compositionally biased region" description="Basic and acidic residues" evidence="3">
    <location>
        <begin position="994"/>
        <end position="1004"/>
    </location>
</feature>
<feature type="compositionally biased region" description="Polar residues" evidence="3">
    <location>
        <begin position="1040"/>
        <end position="1050"/>
    </location>
</feature>
<feature type="modified residue" description="Phosphoserine" evidence="17">
    <location>
        <position position="962"/>
    </location>
</feature>
<feature type="modified residue" description="Phosphoserine" evidence="17">
    <location>
        <position position="970"/>
    </location>
</feature>
<feature type="modified residue" description="Phosphothreonine" evidence="16 17">
    <location>
        <position position="1023"/>
    </location>
</feature>
<feature type="sequence variant" id="VAR_030317" description="In dbSNP:rs2287669." evidence="4">
    <original>S</original>
    <variation>G</variation>
    <location>
        <position position="657"/>
    </location>
</feature>
<feature type="sequence variant" id="VAR_030318" description="In dbSNP:rs2302970." evidence="4">
    <original>P</original>
    <variation>R</variation>
    <location>
        <position position="761"/>
    </location>
</feature>
<feature type="mutagenesis site" description="Disrupts interaction with VPS29; when associated with A-434." evidence="11">
    <original>H</original>
    <variation>A</variation>
    <location>
        <position position="432"/>
    </location>
</feature>
<feature type="mutagenesis site" description="Disrupts interaction with VPS29; when associated with A-432." evidence="11">
    <original>L</original>
    <variation>A</variation>
    <location>
        <position position="434"/>
    </location>
</feature>
<feature type="mutagenesis site" description="Disrupts interaction with RAB32." evidence="11">
    <original>Q</original>
    <variation>A</variation>
    <location>
        <position position="509"/>
    </location>
</feature>
<feature type="mutagenesis site" description="Disrupts interaction with RAB32." evidence="11">
    <original>L</original>
    <variation>D</variation>
    <location>
        <position position="513"/>
    </location>
</feature>
<feature type="mutagenesis site" description="Impairs interaction with RAB32." evidence="11">
    <original>K</original>
    <variation>D</variation>
    <location>
        <position position="546"/>
    </location>
</feature>
<feature type="mutagenesis site" description="Impairs interaction with RAB32." evidence="11">
    <original>Y</original>
    <variation>A</variation>
    <location>
        <position position="550"/>
    </location>
</feature>
<feature type="mutagenesis site" description="Disrupts interaction with VAMP7." evidence="10">
    <original>D</original>
    <variation>A</variation>
    <location>
        <position position="679"/>
    </location>
</feature>
<feature type="mutagenesis site" description="Disrupts interaction with VAMP7." evidence="10">
    <original>D</original>
    <variation>A</variation>
    <location>
        <position position="681"/>
    </location>
</feature>
<feature type="mutagenesis site" description="Disrupts interaction with VAMP7." evidence="10">
    <original>M</original>
    <variation>D</variation>
    <location>
        <position position="684"/>
    </location>
</feature>
<feature type="mutagenesis site" description="Disrupts interaction with VAMP7." evidence="10">
    <original>Y</original>
    <variation>S</variation>
    <location>
        <position position="687"/>
    </location>
</feature>
<feature type="mutagenesis site" description="Disrupts interaction with VPS29; when associated with A-714." evidence="11">
    <original>H</original>
    <variation>A</variation>
    <location>
        <position position="712"/>
    </location>
</feature>
<feature type="mutagenesis site" description="Disrupts interaction with VPS29; when associated with A-712." evidence="11">
    <original>L</original>
    <variation>A</variation>
    <location>
        <position position="714"/>
    </location>
</feature>
<feature type="sequence conflict" description="In Ref. 4; AAQ04657." evidence="12" ref="4">
    <original>HRTFRECERKSLRHHI</original>
    <variation>LIEHSENARERASVTT</variation>
    <location>
        <begin position="160"/>
        <end position="175"/>
    </location>
</feature>
<feature type="helix" evidence="19">
    <location>
        <begin position="466"/>
        <end position="473"/>
    </location>
</feature>
<feature type="helix" evidence="19">
    <location>
        <begin position="476"/>
        <end position="484"/>
    </location>
</feature>
<feature type="helix" evidence="19">
    <location>
        <begin position="499"/>
        <end position="506"/>
    </location>
</feature>
<feature type="helix" evidence="19">
    <location>
        <begin position="509"/>
        <end position="517"/>
    </location>
</feature>
<feature type="helix" evidence="19">
    <location>
        <begin position="532"/>
        <end position="538"/>
    </location>
</feature>
<feature type="helix" evidence="19">
    <location>
        <begin position="542"/>
        <end position="551"/>
    </location>
</feature>
<feature type="strand" evidence="19">
    <location>
        <begin position="552"/>
        <end position="554"/>
    </location>
</feature>
<feature type="helix" evidence="19">
    <location>
        <begin position="568"/>
        <end position="574"/>
    </location>
</feature>
<feature type="helix" evidence="19">
    <location>
        <begin position="578"/>
        <end position="586"/>
    </location>
</feature>
<feature type="helix" evidence="19">
    <location>
        <begin position="601"/>
        <end position="604"/>
    </location>
</feature>
<feature type="helix" evidence="19">
    <location>
        <begin position="608"/>
        <end position="615"/>
    </location>
</feature>
<feature type="helix" evidence="18">
    <location>
        <begin position="668"/>
        <end position="678"/>
    </location>
</feature>
<feature type="helix" evidence="18">
    <location>
        <begin position="682"/>
        <end position="689"/>
    </location>
</feature>
<feature type="strand" evidence="20">
    <location>
        <begin position="734"/>
        <end position="736"/>
    </location>
</feature>
<feature type="turn" evidence="20">
    <location>
        <begin position="744"/>
        <end position="746"/>
    </location>
</feature>
<feature type="helix" evidence="18">
    <location>
        <begin position="747"/>
        <end position="753"/>
    </location>
</feature>
<feature type="helix" evidence="18">
    <location>
        <begin position="759"/>
        <end position="765"/>
    </location>
</feature>
<feature type="helix" evidence="18">
    <location>
        <begin position="780"/>
        <end position="787"/>
    </location>
</feature>
<feature type="helix" evidence="18">
    <location>
        <begin position="790"/>
        <end position="798"/>
    </location>
</feature>
<feature type="helix" evidence="18">
    <location>
        <begin position="813"/>
        <end position="819"/>
    </location>
</feature>
<feature type="helix" evidence="18">
    <location>
        <begin position="823"/>
        <end position="825"/>
    </location>
</feature>
<feature type="helix" evidence="18">
    <location>
        <begin position="826"/>
        <end position="831"/>
    </location>
</feature>
<feature type="helix" evidence="18">
    <location>
        <begin position="846"/>
        <end position="852"/>
    </location>
</feature>
<feature type="helix" evidence="18">
    <location>
        <begin position="856"/>
        <end position="864"/>
    </location>
</feature>
<feature type="helix" evidence="18">
    <location>
        <begin position="880"/>
        <end position="882"/>
    </location>
</feature>
<feature type="helix" evidence="18">
    <location>
        <begin position="888"/>
        <end position="892"/>
    </location>
</feature>
<proteinExistence type="evidence at protein level"/>
<dbReference type="EMBL" id="AL136784">
    <property type="protein sequence ID" value="CAB66718.1"/>
    <property type="molecule type" value="mRNA"/>
</dbReference>
<dbReference type="EMBL" id="AK054561">
    <property type="protein sequence ID" value="BAB70755.1"/>
    <property type="status" value="ALT_INIT"/>
    <property type="molecule type" value="mRNA"/>
</dbReference>
<dbReference type="EMBL" id="BC050529">
    <property type="protein sequence ID" value="AAH50529.1"/>
    <property type="molecule type" value="mRNA"/>
</dbReference>
<dbReference type="EMBL" id="AF447882">
    <property type="protein sequence ID" value="AAQ04657.1"/>
    <property type="molecule type" value="mRNA"/>
</dbReference>
<dbReference type="EMBL" id="AL834335">
    <property type="protein sequence ID" value="CAD39003.1"/>
    <property type="molecule type" value="mRNA"/>
</dbReference>
<dbReference type="CCDS" id="CCDS32986.1"/>
<dbReference type="RefSeq" id="NP_115515.2">
    <property type="nucleotide sequence ID" value="NM_032139.3"/>
</dbReference>
<dbReference type="RefSeq" id="XP_006723475.1">
    <property type="nucleotide sequence ID" value="XM_006723412.2"/>
</dbReference>
<dbReference type="PDB" id="4B93">
    <property type="method" value="X-ray"/>
    <property type="resolution" value="2.00 A"/>
    <property type="chains" value="B=659-921"/>
</dbReference>
<dbReference type="PDB" id="4CYM">
    <property type="method" value="X-ray"/>
    <property type="resolution" value="2.80 A"/>
    <property type="chains" value="D/E/F=450-640"/>
</dbReference>
<dbReference type="PDB" id="4CZ2">
    <property type="method" value="X-ray"/>
    <property type="resolution" value="2.97 A"/>
    <property type="chains" value="D/E/F=450-640"/>
</dbReference>
<dbReference type="PDB" id="6TL0">
    <property type="method" value="NMR"/>
    <property type="chains" value="B=692-746"/>
</dbReference>
<dbReference type="PDBsum" id="4B93"/>
<dbReference type="PDBsum" id="4CYM"/>
<dbReference type="PDBsum" id="4CZ2"/>
<dbReference type="PDBsum" id="6TL0"/>
<dbReference type="SMR" id="Q96NW4"/>
<dbReference type="BioGRID" id="123874">
    <property type="interactions" value="44"/>
</dbReference>
<dbReference type="DIP" id="DIP-57614N"/>
<dbReference type="FunCoup" id="Q96NW4">
    <property type="interactions" value="2465"/>
</dbReference>
<dbReference type="IntAct" id="Q96NW4">
    <property type="interactions" value="32"/>
</dbReference>
<dbReference type="MINT" id="Q96NW4"/>
<dbReference type="STRING" id="9606.ENSP00000304292"/>
<dbReference type="GlyGen" id="Q96NW4">
    <property type="glycosylation" value="1 site, 1 O-linked glycan (1 site)"/>
</dbReference>
<dbReference type="iPTMnet" id="Q96NW4"/>
<dbReference type="PhosphoSitePlus" id="Q96NW4"/>
<dbReference type="SwissPalm" id="Q96NW4"/>
<dbReference type="BioMuta" id="ANKRD27"/>
<dbReference type="DMDM" id="125987706"/>
<dbReference type="CPTAC" id="CPTAC-1175"/>
<dbReference type="CPTAC" id="CPTAC-1198"/>
<dbReference type="jPOST" id="Q96NW4"/>
<dbReference type="MassIVE" id="Q96NW4"/>
<dbReference type="PaxDb" id="9606-ENSP00000304292"/>
<dbReference type="PeptideAtlas" id="Q96NW4"/>
<dbReference type="ProteomicsDB" id="77566"/>
<dbReference type="Pumba" id="Q96NW4"/>
<dbReference type="Antibodypedia" id="47942">
    <property type="antibodies" value="89 antibodies from 25 providers"/>
</dbReference>
<dbReference type="DNASU" id="84079"/>
<dbReference type="Ensembl" id="ENST00000306065.9">
    <property type="protein sequence ID" value="ENSP00000304292.3"/>
    <property type="gene ID" value="ENSG00000105186.16"/>
</dbReference>
<dbReference type="GeneID" id="84079"/>
<dbReference type="KEGG" id="hsa:84079"/>
<dbReference type="MANE-Select" id="ENST00000306065.9">
    <property type="protein sequence ID" value="ENSP00000304292.3"/>
    <property type="RefSeq nucleotide sequence ID" value="NM_032139.3"/>
    <property type="RefSeq protein sequence ID" value="NP_115515.2"/>
</dbReference>
<dbReference type="UCSC" id="uc002ntn.2">
    <property type="organism name" value="human"/>
</dbReference>
<dbReference type="AGR" id="HGNC:25310"/>
<dbReference type="CTD" id="84079"/>
<dbReference type="DisGeNET" id="84079"/>
<dbReference type="GeneCards" id="ANKRD27"/>
<dbReference type="HGNC" id="HGNC:25310">
    <property type="gene designation" value="ANKRD27"/>
</dbReference>
<dbReference type="HPA" id="ENSG00000105186">
    <property type="expression patterns" value="Low tissue specificity"/>
</dbReference>
<dbReference type="MIM" id="618957">
    <property type="type" value="gene"/>
</dbReference>
<dbReference type="neXtProt" id="NX_Q96NW4"/>
<dbReference type="OpenTargets" id="ENSG00000105186"/>
<dbReference type="PharmGKB" id="PA134893411"/>
<dbReference type="VEuPathDB" id="HostDB:ENSG00000105186"/>
<dbReference type="eggNOG" id="KOG2319">
    <property type="taxonomic scope" value="Eukaryota"/>
</dbReference>
<dbReference type="GeneTree" id="ENSGT00940000157021"/>
<dbReference type="HOGENOM" id="CLU_010760_0_1_1"/>
<dbReference type="InParanoid" id="Q96NW4"/>
<dbReference type="OMA" id="WIVCVPR"/>
<dbReference type="OrthoDB" id="411646at2759"/>
<dbReference type="PAN-GO" id="Q96NW4">
    <property type="GO annotations" value="10 GO annotations based on evolutionary models"/>
</dbReference>
<dbReference type="PhylomeDB" id="Q96NW4"/>
<dbReference type="TreeFam" id="TF351261"/>
<dbReference type="PathwayCommons" id="Q96NW4"/>
<dbReference type="Reactome" id="R-HSA-8876198">
    <property type="pathway name" value="RAB GEFs exchange GTP for GDP on RABs"/>
</dbReference>
<dbReference type="SignaLink" id="Q96NW4"/>
<dbReference type="BioGRID-ORCS" id="84079">
    <property type="hits" value="10 hits in 1154 CRISPR screens"/>
</dbReference>
<dbReference type="ChiTaRS" id="ANKRD27">
    <property type="organism name" value="human"/>
</dbReference>
<dbReference type="EvolutionaryTrace" id="Q96NW4"/>
<dbReference type="GeneWiki" id="ANKRD27"/>
<dbReference type="GenomeRNAi" id="84079"/>
<dbReference type="Pharos" id="Q96NW4">
    <property type="development level" value="Tbio"/>
</dbReference>
<dbReference type="PRO" id="PR:Q96NW4"/>
<dbReference type="Proteomes" id="UP000005640">
    <property type="component" value="Chromosome 19"/>
</dbReference>
<dbReference type="RNAct" id="Q96NW4">
    <property type="molecule type" value="protein"/>
</dbReference>
<dbReference type="Bgee" id="ENSG00000105186">
    <property type="expression patterns" value="Expressed in choroid plexus epithelium and 202 other cell types or tissues"/>
</dbReference>
<dbReference type="ExpressionAtlas" id="Q96NW4">
    <property type="expression patterns" value="baseline and differential"/>
</dbReference>
<dbReference type="GO" id="GO:0030659">
    <property type="term" value="C:cytoplasmic vesicle membrane"/>
    <property type="evidence" value="ECO:0007669"/>
    <property type="project" value="UniProtKB-SubCell"/>
</dbReference>
<dbReference type="GO" id="GO:0005829">
    <property type="term" value="C:cytosol"/>
    <property type="evidence" value="ECO:0000314"/>
    <property type="project" value="HPA"/>
</dbReference>
<dbReference type="GO" id="GO:0005769">
    <property type="term" value="C:early endosome"/>
    <property type="evidence" value="ECO:0000314"/>
    <property type="project" value="UniProtKB"/>
</dbReference>
<dbReference type="GO" id="GO:0043231">
    <property type="term" value="C:intracellular membrane-bounded organelle"/>
    <property type="evidence" value="ECO:0000314"/>
    <property type="project" value="HPA"/>
</dbReference>
<dbReference type="GO" id="GO:0005770">
    <property type="term" value="C:late endosome"/>
    <property type="evidence" value="ECO:0000314"/>
    <property type="project" value="UniProtKB"/>
</dbReference>
<dbReference type="GO" id="GO:0005764">
    <property type="term" value="C:lysosome"/>
    <property type="evidence" value="ECO:0000314"/>
    <property type="project" value="UniProtKB"/>
</dbReference>
<dbReference type="GO" id="GO:0042470">
    <property type="term" value="C:melanosome"/>
    <property type="evidence" value="ECO:0007669"/>
    <property type="project" value="UniProtKB-SubCell"/>
</dbReference>
<dbReference type="GO" id="GO:0016020">
    <property type="term" value="C:membrane"/>
    <property type="evidence" value="ECO:0007005"/>
    <property type="project" value="UniProtKB"/>
</dbReference>
<dbReference type="GO" id="GO:0043005">
    <property type="term" value="C:neuron projection"/>
    <property type="evidence" value="ECO:0000318"/>
    <property type="project" value="GO_Central"/>
</dbReference>
<dbReference type="GO" id="GO:0005886">
    <property type="term" value="C:plasma membrane"/>
    <property type="evidence" value="ECO:0000314"/>
    <property type="project" value="UniProtKB"/>
</dbReference>
<dbReference type="GO" id="GO:0030133">
    <property type="term" value="C:transport vesicle"/>
    <property type="evidence" value="ECO:0000318"/>
    <property type="project" value="GO_Central"/>
</dbReference>
<dbReference type="GO" id="GO:0097422">
    <property type="term" value="C:tubular endosome"/>
    <property type="evidence" value="ECO:0000314"/>
    <property type="project" value="UniProtKB"/>
</dbReference>
<dbReference type="GO" id="GO:0005096">
    <property type="term" value="F:GTPase activator activity"/>
    <property type="evidence" value="ECO:0007669"/>
    <property type="project" value="UniProtKB-KW"/>
</dbReference>
<dbReference type="GO" id="GO:0005085">
    <property type="term" value="F:guanyl-nucleotide exchange factor activity"/>
    <property type="evidence" value="ECO:0000314"/>
    <property type="project" value="MGI"/>
</dbReference>
<dbReference type="GO" id="GO:0031267">
    <property type="term" value="F:small GTPase binding"/>
    <property type="evidence" value="ECO:0000314"/>
    <property type="project" value="UniProtKB"/>
</dbReference>
<dbReference type="GO" id="GO:0000149">
    <property type="term" value="F:SNARE binding"/>
    <property type="evidence" value="ECO:0000318"/>
    <property type="project" value="GO_Central"/>
</dbReference>
<dbReference type="GO" id="GO:0045022">
    <property type="term" value="P:early endosome to late endosome transport"/>
    <property type="evidence" value="ECO:0000314"/>
    <property type="project" value="MGI"/>
</dbReference>
<dbReference type="GO" id="GO:0032456">
    <property type="term" value="P:endocytic recycling"/>
    <property type="evidence" value="ECO:0000315"/>
    <property type="project" value="UniProtKB"/>
</dbReference>
<dbReference type="GO" id="GO:0035646">
    <property type="term" value="P:endosome to melanosome transport"/>
    <property type="evidence" value="ECO:0007669"/>
    <property type="project" value="Ensembl"/>
</dbReference>
<dbReference type="GO" id="GO:0035544">
    <property type="term" value="P:negative regulation of SNARE complex assembly"/>
    <property type="evidence" value="ECO:0000314"/>
    <property type="project" value="UniProtKB"/>
</dbReference>
<dbReference type="GO" id="GO:0048812">
    <property type="term" value="P:neuron projection morphogenesis"/>
    <property type="evidence" value="ECO:0000318"/>
    <property type="project" value="GO_Central"/>
</dbReference>
<dbReference type="GO" id="GO:0050775">
    <property type="term" value="P:positive regulation of dendrite morphogenesis"/>
    <property type="evidence" value="ECO:0007669"/>
    <property type="project" value="Ensembl"/>
</dbReference>
<dbReference type="GO" id="GO:0010976">
    <property type="term" value="P:positive regulation of neuron projection development"/>
    <property type="evidence" value="ECO:0007669"/>
    <property type="project" value="Ensembl"/>
</dbReference>
<dbReference type="GO" id="GO:0015031">
    <property type="term" value="P:protein transport"/>
    <property type="evidence" value="ECO:0007669"/>
    <property type="project" value="UniProtKB-KW"/>
</dbReference>
<dbReference type="CDD" id="cd22885">
    <property type="entry name" value="ANKRD27_zf1"/>
    <property type="match status" value="1"/>
</dbReference>
<dbReference type="CDD" id="cd22886">
    <property type="entry name" value="ANKRD27_zf2"/>
    <property type="match status" value="1"/>
</dbReference>
<dbReference type="DisProt" id="DP02601"/>
<dbReference type="FunFam" id="1.25.40.20:FF:000065">
    <property type="entry name" value="Ankyrin repeat domain-containing protein 27"/>
    <property type="match status" value="1"/>
</dbReference>
<dbReference type="FunFam" id="1.25.40.20:FF:000087">
    <property type="entry name" value="Ankyrin repeat domain-containing protein 27"/>
    <property type="match status" value="1"/>
</dbReference>
<dbReference type="FunFam" id="1.20.1050.80:FF:000004">
    <property type="entry name" value="ankyrin repeat domain-containing protein 27"/>
    <property type="match status" value="1"/>
</dbReference>
<dbReference type="Gene3D" id="1.25.40.20">
    <property type="entry name" value="Ankyrin repeat-containing domain"/>
    <property type="match status" value="2"/>
</dbReference>
<dbReference type="Gene3D" id="1.20.1050.80">
    <property type="entry name" value="VPS9 domain"/>
    <property type="match status" value="1"/>
</dbReference>
<dbReference type="InterPro" id="IPR002110">
    <property type="entry name" value="Ankyrin_rpt"/>
</dbReference>
<dbReference type="InterPro" id="IPR036770">
    <property type="entry name" value="Ankyrin_rpt-contain_sf"/>
</dbReference>
<dbReference type="InterPro" id="IPR051248">
    <property type="entry name" value="UPF0507/Ank_repeat_27"/>
</dbReference>
<dbReference type="InterPro" id="IPR003123">
    <property type="entry name" value="VPS9"/>
</dbReference>
<dbReference type="InterPro" id="IPR037191">
    <property type="entry name" value="VPS9_dom_sf"/>
</dbReference>
<dbReference type="PANTHER" id="PTHR24170">
    <property type="entry name" value="ANKYRIN REPEAT DOMAIN-CONTAINING PROTEIN 27"/>
    <property type="match status" value="1"/>
</dbReference>
<dbReference type="PANTHER" id="PTHR24170:SF2">
    <property type="entry name" value="ANKYRIN REPEAT DOMAIN-CONTAINING PROTEIN 27"/>
    <property type="match status" value="1"/>
</dbReference>
<dbReference type="Pfam" id="PF00023">
    <property type="entry name" value="Ank"/>
    <property type="match status" value="2"/>
</dbReference>
<dbReference type="Pfam" id="PF12796">
    <property type="entry name" value="Ank_2"/>
    <property type="match status" value="2"/>
</dbReference>
<dbReference type="Pfam" id="PF02204">
    <property type="entry name" value="VPS9"/>
    <property type="match status" value="1"/>
</dbReference>
<dbReference type="PRINTS" id="PR01415">
    <property type="entry name" value="ANKYRIN"/>
</dbReference>
<dbReference type="SMART" id="SM00248">
    <property type="entry name" value="ANK"/>
    <property type="match status" value="8"/>
</dbReference>
<dbReference type="SMART" id="SM00167">
    <property type="entry name" value="VPS9"/>
    <property type="match status" value="1"/>
</dbReference>
<dbReference type="SUPFAM" id="SSF48403">
    <property type="entry name" value="Ankyrin repeat"/>
    <property type="match status" value="2"/>
</dbReference>
<dbReference type="SUPFAM" id="SSF109993">
    <property type="entry name" value="VPS9 domain"/>
    <property type="match status" value="1"/>
</dbReference>
<dbReference type="PROSITE" id="PS50297">
    <property type="entry name" value="ANK_REP_REGION"/>
    <property type="match status" value="1"/>
</dbReference>
<dbReference type="PROSITE" id="PS50088">
    <property type="entry name" value="ANK_REPEAT"/>
    <property type="match status" value="8"/>
</dbReference>
<dbReference type="PROSITE" id="PS51205">
    <property type="entry name" value="VPS9"/>
    <property type="match status" value="1"/>
</dbReference>
<gene>
    <name type="primary">ANKRD27</name>
    <name type="ORF">PP12899</name>
</gene>
<protein>
    <recommendedName>
        <fullName>Ankyrin repeat domain-containing protein 27</fullName>
    </recommendedName>
    <alternativeName>
        <fullName>VPS9 domain-containing protein</fullName>
    </alternativeName>
</protein>
<name>ANR27_HUMAN</name>
<accession>Q96NW4</accession>
<accession>Q71MF5</accession>
<accession>Q86UC3</accession>
<accession>Q8ND80</accession>
<accession>Q9H0I4</accession>
<reference key="1">
    <citation type="journal article" date="2001" name="Genome Res.">
        <title>Towards a catalog of human genes and proteins: sequencing and analysis of 500 novel complete protein coding human cDNAs.</title>
        <authorList>
            <person name="Wiemann S."/>
            <person name="Weil B."/>
            <person name="Wellenreuther R."/>
            <person name="Gassenhuber J."/>
            <person name="Glassl S."/>
            <person name="Ansorge W."/>
            <person name="Boecher M."/>
            <person name="Bloecker H."/>
            <person name="Bauersachs S."/>
            <person name="Blum H."/>
            <person name="Lauber J."/>
            <person name="Duesterhoeft A."/>
            <person name="Beyer A."/>
            <person name="Koehrer K."/>
            <person name="Strack N."/>
            <person name="Mewes H.-W."/>
            <person name="Ottenwaelder B."/>
            <person name="Obermaier B."/>
            <person name="Tampe J."/>
            <person name="Heubner D."/>
            <person name="Wambutt R."/>
            <person name="Korn B."/>
            <person name="Klein M."/>
            <person name="Poustka A."/>
        </authorList>
    </citation>
    <scope>NUCLEOTIDE SEQUENCE [LARGE SCALE MRNA]</scope>
    <scope>VARIANTS GLY-657 AND ARG-761</scope>
    <source>
        <tissue>Testis</tissue>
    </source>
</reference>
<reference key="2">
    <citation type="journal article" date="2004" name="Nat. Genet.">
        <title>Complete sequencing and characterization of 21,243 full-length human cDNAs.</title>
        <authorList>
            <person name="Ota T."/>
            <person name="Suzuki Y."/>
            <person name="Nishikawa T."/>
            <person name="Otsuki T."/>
            <person name="Sugiyama T."/>
            <person name="Irie R."/>
            <person name="Wakamatsu A."/>
            <person name="Hayashi K."/>
            <person name="Sato H."/>
            <person name="Nagai K."/>
            <person name="Kimura K."/>
            <person name="Makita H."/>
            <person name="Sekine M."/>
            <person name="Obayashi M."/>
            <person name="Nishi T."/>
            <person name="Shibahara T."/>
            <person name="Tanaka T."/>
            <person name="Ishii S."/>
            <person name="Yamamoto J."/>
            <person name="Saito K."/>
            <person name="Kawai Y."/>
            <person name="Isono Y."/>
            <person name="Nakamura Y."/>
            <person name="Nagahari K."/>
            <person name="Murakami K."/>
            <person name="Yasuda T."/>
            <person name="Iwayanagi T."/>
            <person name="Wagatsuma M."/>
            <person name="Shiratori A."/>
            <person name="Sudo H."/>
            <person name="Hosoiri T."/>
            <person name="Kaku Y."/>
            <person name="Kodaira H."/>
            <person name="Kondo H."/>
            <person name="Sugawara M."/>
            <person name="Takahashi M."/>
            <person name="Kanda K."/>
            <person name="Yokoi T."/>
            <person name="Furuya T."/>
            <person name="Kikkawa E."/>
            <person name="Omura Y."/>
            <person name="Abe K."/>
            <person name="Kamihara K."/>
            <person name="Katsuta N."/>
            <person name="Sato K."/>
            <person name="Tanikawa M."/>
            <person name="Yamazaki M."/>
            <person name="Ninomiya K."/>
            <person name="Ishibashi T."/>
            <person name="Yamashita H."/>
            <person name="Murakawa K."/>
            <person name="Fujimori K."/>
            <person name="Tanai H."/>
            <person name="Kimata M."/>
            <person name="Watanabe M."/>
            <person name="Hiraoka S."/>
            <person name="Chiba Y."/>
            <person name="Ishida S."/>
            <person name="Ono Y."/>
            <person name="Takiguchi S."/>
            <person name="Watanabe S."/>
            <person name="Yosida M."/>
            <person name="Hotuta T."/>
            <person name="Kusano J."/>
            <person name="Kanehori K."/>
            <person name="Takahashi-Fujii A."/>
            <person name="Hara H."/>
            <person name="Tanase T.-O."/>
            <person name="Nomura Y."/>
            <person name="Togiya S."/>
            <person name="Komai F."/>
            <person name="Hara R."/>
            <person name="Takeuchi K."/>
            <person name="Arita M."/>
            <person name="Imose N."/>
            <person name="Musashino K."/>
            <person name="Yuuki H."/>
            <person name="Oshima A."/>
            <person name="Sasaki N."/>
            <person name="Aotsuka S."/>
            <person name="Yoshikawa Y."/>
            <person name="Matsunawa H."/>
            <person name="Ichihara T."/>
            <person name="Shiohata N."/>
            <person name="Sano S."/>
            <person name="Moriya S."/>
            <person name="Momiyama H."/>
            <person name="Satoh N."/>
            <person name="Takami S."/>
            <person name="Terashima Y."/>
            <person name="Suzuki O."/>
            <person name="Nakagawa S."/>
            <person name="Senoh A."/>
            <person name="Mizoguchi H."/>
            <person name="Goto Y."/>
            <person name="Shimizu F."/>
            <person name="Wakebe H."/>
            <person name="Hishigaki H."/>
            <person name="Watanabe T."/>
            <person name="Sugiyama A."/>
            <person name="Takemoto M."/>
            <person name="Kawakami B."/>
            <person name="Yamazaki M."/>
            <person name="Watanabe K."/>
            <person name="Kumagai A."/>
            <person name="Itakura S."/>
            <person name="Fukuzumi Y."/>
            <person name="Fujimori Y."/>
            <person name="Komiyama M."/>
            <person name="Tashiro H."/>
            <person name="Tanigami A."/>
            <person name="Fujiwara T."/>
            <person name="Ono T."/>
            <person name="Yamada K."/>
            <person name="Fujii Y."/>
            <person name="Ozaki K."/>
            <person name="Hirao M."/>
            <person name="Ohmori Y."/>
            <person name="Kawabata A."/>
            <person name="Hikiji T."/>
            <person name="Kobatake N."/>
            <person name="Inagaki H."/>
            <person name="Ikema Y."/>
            <person name="Okamoto S."/>
            <person name="Okitani R."/>
            <person name="Kawakami T."/>
            <person name="Noguchi S."/>
            <person name="Itoh T."/>
            <person name="Shigeta K."/>
            <person name="Senba T."/>
            <person name="Matsumura K."/>
            <person name="Nakajima Y."/>
            <person name="Mizuno T."/>
            <person name="Morinaga M."/>
            <person name="Sasaki M."/>
            <person name="Togashi T."/>
            <person name="Oyama M."/>
            <person name="Hata H."/>
            <person name="Watanabe M."/>
            <person name="Komatsu T."/>
            <person name="Mizushima-Sugano J."/>
            <person name="Satoh T."/>
            <person name="Shirai Y."/>
            <person name="Takahashi Y."/>
            <person name="Nakagawa K."/>
            <person name="Okumura K."/>
            <person name="Nagase T."/>
            <person name="Nomura N."/>
            <person name="Kikuchi H."/>
            <person name="Masuho Y."/>
            <person name="Yamashita R."/>
            <person name="Nakai K."/>
            <person name="Yada T."/>
            <person name="Nakamura Y."/>
            <person name="Ohara O."/>
            <person name="Isogai T."/>
            <person name="Sugano S."/>
        </authorList>
    </citation>
    <scope>NUCLEOTIDE SEQUENCE [LARGE SCALE MRNA]</scope>
    <source>
        <tissue>Spleen</tissue>
    </source>
</reference>
<reference key="3">
    <citation type="journal article" date="2004" name="Genome Res.">
        <title>The status, quality, and expansion of the NIH full-length cDNA project: the Mammalian Gene Collection (MGC).</title>
        <authorList>
            <consortium name="The MGC Project Team"/>
        </authorList>
    </citation>
    <scope>NUCLEOTIDE SEQUENCE [LARGE SCALE MRNA]</scope>
    <source>
        <tissue>Testis</tissue>
    </source>
</reference>
<reference key="4">
    <citation type="journal article" date="2004" name="Proc. Natl. Acad. Sci. U.S.A.">
        <title>Large-scale cDNA transfection screening for genes related to cancer development and progression.</title>
        <authorList>
            <person name="Wan D."/>
            <person name="Gong Y."/>
            <person name="Qin W."/>
            <person name="Zhang P."/>
            <person name="Li J."/>
            <person name="Wei L."/>
            <person name="Zhou X."/>
            <person name="Li H."/>
            <person name="Qiu X."/>
            <person name="Zhong F."/>
            <person name="He L."/>
            <person name="Yu J."/>
            <person name="Yao G."/>
            <person name="Jiang H."/>
            <person name="Qian L."/>
            <person name="Yu Y."/>
            <person name="Shu H."/>
            <person name="Chen X."/>
            <person name="Xu H."/>
            <person name="Guo M."/>
            <person name="Pan Z."/>
            <person name="Chen Y."/>
            <person name="Ge C."/>
            <person name="Yang S."/>
            <person name="Gu J."/>
        </authorList>
    </citation>
    <scope>NUCLEOTIDE SEQUENCE [LARGE SCALE MRNA] OF 1-175</scope>
</reference>
<reference key="5">
    <citation type="journal article" date="2007" name="BMC Genomics">
        <title>The full-ORF clone resource of the German cDNA consortium.</title>
        <authorList>
            <person name="Bechtel S."/>
            <person name="Rosenfelder H."/>
            <person name="Duda A."/>
            <person name="Schmidt C.P."/>
            <person name="Ernst U."/>
            <person name="Wellenreuther R."/>
            <person name="Mehrle A."/>
            <person name="Schuster C."/>
            <person name="Bahr A."/>
            <person name="Bloecker H."/>
            <person name="Heubner D."/>
            <person name="Hoerlein A."/>
            <person name="Michel G."/>
            <person name="Wedler H."/>
            <person name="Koehrer K."/>
            <person name="Ottenwaelder B."/>
            <person name="Poustka A."/>
            <person name="Wiemann S."/>
            <person name="Schupp I."/>
        </authorList>
    </citation>
    <scope>NUCLEOTIDE SEQUENCE [LARGE SCALE MRNA] OF 644-1050</scope>
    <source>
        <tissue>Testis</tissue>
    </source>
</reference>
<reference key="6">
    <citation type="journal article" date="2006" name="J. Cell Sci.">
        <title>Varp is a Rab21 guanine nucleotide exchange factor and regulates endosome dynamics.</title>
        <authorList>
            <person name="Zhang X."/>
            <person name="He X."/>
            <person name="Fu X.-Y."/>
            <person name="Chang Z."/>
        </authorList>
    </citation>
    <scope>FUNCTION</scope>
    <scope>INTERACTION WITH RAB21 AND RAB5A</scope>
    <scope>SUBCELLULAR LOCATION</scope>
</reference>
<reference key="7">
    <citation type="journal article" date="2008" name="Biochem. Biophys. Res. Commun.">
        <title>Varp interacts with Rab38 and functions as its potential effector.</title>
        <authorList>
            <person name="Wang F."/>
            <person name="Zhang H."/>
            <person name="Zhang X."/>
            <person name="Wang Y."/>
            <person name="Ren F."/>
            <person name="Zhang X."/>
            <person name="Zhai Y."/>
            <person name="Chang Z."/>
        </authorList>
    </citation>
    <scope>FUNCTION</scope>
    <scope>INTERACTION WITH RAB38 AND RAB21</scope>
</reference>
<reference key="8">
    <citation type="journal article" date="2008" name="J. Proteome Res.">
        <title>Combining protein-based IMAC, peptide-based IMAC, and MudPIT for efficient phosphoproteomic analysis.</title>
        <authorList>
            <person name="Cantin G.T."/>
            <person name="Yi W."/>
            <person name="Lu B."/>
            <person name="Park S.K."/>
            <person name="Xu T."/>
            <person name="Lee J.-D."/>
            <person name="Yates J.R. III"/>
        </authorList>
    </citation>
    <scope>PHOSPHORYLATION [LARGE SCALE ANALYSIS] AT THR-1023</scope>
    <scope>IDENTIFICATION BY MASS SPECTROMETRY [LARGE SCALE ANALYSIS]</scope>
    <source>
        <tissue>Cervix carcinoma</tissue>
    </source>
</reference>
<reference key="9">
    <citation type="journal article" date="2009" name="EMBO Rep.">
        <title>Role of Varp, a Rab21 exchange factor and TI-VAMP/VAMP7 partner, in neurite growth.</title>
        <authorList>
            <person name="Burgo A."/>
            <person name="Sotirakis E."/>
            <person name="Simmler M.C."/>
            <person name="Verraes A."/>
            <person name="Chamot C."/>
            <person name="Simpson J.C."/>
            <person name="Lanzetti L."/>
            <person name="Proux-Gillardeaux V."/>
            <person name="Galli T."/>
        </authorList>
    </citation>
    <scope>FUNCTION</scope>
    <scope>INTERACTION WITH RAB21 AND VAMP7</scope>
    <scope>SUBCELLULAR LOCATION</scope>
</reference>
<reference key="10">
    <citation type="journal article" date="2009" name="Sci. Signal.">
        <title>Quantitative phosphoproteomic analysis of T cell receptor signaling reveals system-wide modulation of protein-protein interactions.</title>
        <authorList>
            <person name="Mayya V."/>
            <person name="Lundgren D.H."/>
            <person name="Hwang S.-I."/>
            <person name="Rezaul K."/>
            <person name="Wu L."/>
            <person name="Eng J.K."/>
            <person name="Rodionov V."/>
            <person name="Han D.K."/>
        </authorList>
    </citation>
    <scope>IDENTIFICATION BY MASS SPECTROMETRY [LARGE SCALE ANALYSIS]</scope>
    <source>
        <tissue>Leukemic T-cell</tissue>
    </source>
</reference>
<reference key="11">
    <citation type="journal article" date="2011" name="J. Biol. Chem.">
        <title>RUTBC1 protein, a Rab9A effector that activates GTP hydrolysis by Rab32 and Rab33B proteins.</title>
        <authorList>
            <person name="Nottingham R.M."/>
            <person name="Ganley I.G."/>
            <person name="Barr F.A."/>
            <person name="Lambright D.G."/>
            <person name="Pfeffer S.R."/>
        </authorList>
    </citation>
    <scope>INTERACTION WITH RAB32</scope>
</reference>
<reference key="12">
    <citation type="journal article" date="2012" name="Dev. Cell">
        <title>A molecular network for the transport of the TI-VAMP/VAMP7 vesicles from cell center to periphery.</title>
        <authorList>
            <person name="Burgo A."/>
            <person name="Proux-Gillardeaux V."/>
            <person name="Sotirakis E."/>
            <person name="Bun P."/>
            <person name="Casano A."/>
            <person name="Verraes A."/>
            <person name="Liem R.K."/>
            <person name="Formstecher E."/>
            <person name="Coppey-Moisan M."/>
            <person name="Galli T."/>
        </authorList>
    </citation>
    <scope>FUNCTION</scope>
    <scope>INTERACTION WITH KIF5A; KIF5C AND GOLGA4</scope>
</reference>
<reference key="13">
    <citation type="journal article" date="2013" name="J. Proteome Res.">
        <title>Toward a comprehensive characterization of a human cancer cell phosphoproteome.</title>
        <authorList>
            <person name="Zhou H."/>
            <person name="Di Palma S."/>
            <person name="Preisinger C."/>
            <person name="Peng M."/>
            <person name="Polat A.N."/>
            <person name="Heck A.J."/>
            <person name="Mohammed S."/>
        </authorList>
    </citation>
    <scope>PHOSPHORYLATION [LARGE SCALE ANALYSIS] AT SER-962; SER-970 AND THR-1023</scope>
    <scope>IDENTIFICATION BY MASS SPECTROMETRY [LARGE SCALE ANALYSIS]</scope>
    <source>
        <tissue>Erythroleukemia</tissue>
    </source>
</reference>
<reference key="14">
    <citation type="journal article" date="2012" name="Nat. Struct. Mol. Biol.">
        <title>The binding of Varp to VAMP7 traps VAMP7 in a closed, fusogenically inactive conformation.</title>
        <authorList>
            <person name="Schafer I.B."/>
            <person name="Hesketh G.G."/>
            <person name="Bright N.A."/>
            <person name="Gray S.R."/>
            <person name="Pryor P.R."/>
            <person name="Evans P.R."/>
            <person name="Luzio J.P."/>
            <person name="Owen D.J."/>
        </authorList>
    </citation>
    <scope>X-RAY CRYSTALLOGRAPHY (2.0 ANGSTROMS) OF 659-921 IN COMPLEX WITH VAMP7</scope>
    <scope>SUBUNIT</scope>
    <scope>FUNCTION</scope>
    <scope>SUBCELLULAR LOCATION</scope>
    <scope>MUTAGENESIS OF ASP-679; ASP-681; MET-684 AND TYR-687</scope>
</reference>
<reference key="15">
    <citation type="journal article" date="2014" name="Dev. Cell">
        <title>VARP is recruited on to endosomes by direct interaction with retromer, where together they function in export to the cell surface.</title>
        <authorList>
            <person name="Hesketh G.G."/>
            <person name="Perez-Dorado I."/>
            <person name="Jackson L.P."/>
            <person name="Wartosch L."/>
            <person name="Schafer I.B."/>
            <person name="Gray S.R."/>
            <person name="McCoy A.J."/>
            <person name="Zeldin O.B."/>
            <person name="Garman E.F."/>
            <person name="Harbour M.E."/>
            <person name="Evans P.R."/>
            <person name="Seaman M.N."/>
            <person name="Luzio J.P."/>
            <person name="Owen D.J."/>
        </authorList>
    </citation>
    <scope>X-RAY CRYSTALLOGRAPHY (2.8 ANGSTROMS) OF 450-640 IN COMPLEX WITH RAB32</scope>
    <scope>FUNCTION</scope>
    <scope>SUBCELLULAR LOCATION</scope>
    <scope>INTERACTION WITH VPS29</scope>
    <scope>MUTAGENESIS OF HIS-432; LEU-434; GLN-509; LEU-513; LYS-546; TYR-550; HIS-712 AND LEU-714</scope>
</reference>
<organism>
    <name type="scientific">Homo sapiens</name>
    <name type="common">Human</name>
    <dbReference type="NCBI Taxonomy" id="9606"/>
    <lineage>
        <taxon>Eukaryota</taxon>
        <taxon>Metazoa</taxon>
        <taxon>Chordata</taxon>
        <taxon>Craniata</taxon>
        <taxon>Vertebrata</taxon>
        <taxon>Euteleostomi</taxon>
        <taxon>Mammalia</taxon>
        <taxon>Eutheria</taxon>
        <taxon>Euarchontoglires</taxon>
        <taxon>Primates</taxon>
        <taxon>Haplorrhini</taxon>
        <taxon>Catarrhini</taxon>
        <taxon>Hominidae</taxon>
        <taxon>Homo</taxon>
    </lineage>
</organism>
<keyword id="KW-0002">3D-structure</keyword>
<keyword id="KW-0040">ANK repeat</keyword>
<keyword id="KW-1003">Cell membrane</keyword>
<keyword id="KW-0968">Cytoplasmic vesicle</keyword>
<keyword id="KW-0967">Endosome</keyword>
<keyword id="KW-0343">GTPase activation</keyword>
<keyword id="KW-0344">Guanine-nucleotide releasing factor</keyword>
<keyword id="KW-0458">Lysosome</keyword>
<keyword id="KW-0472">Membrane</keyword>
<keyword id="KW-0597">Phosphoprotein</keyword>
<keyword id="KW-0653">Protein transport</keyword>
<keyword id="KW-1267">Proteomics identification</keyword>
<keyword id="KW-1185">Reference proteome</keyword>
<keyword id="KW-0677">Repeat</keyword>
<keyword id="KW-0813">Transport</keyword>
<sequence length="1050" mass="116984">MALYDEDLLKNPFYLALQKCRPDLCSKVAQIHGIVLVPCKGSLSSSIQSTCQFESYILIPVEEHFQTLNGKDVFIQGNRIKLGAGFACLLSVPILFEETFYNEKEESFSILCIAHPLEKRESSEEPLAPSDPFSLKTIEDVREFLGRHSERFDRNIASFHRTFRECERKSLRHHIDSANALYTKCLQQLLRDSHLKMLAKQEAQMNLMKQAVEIYVHHEIYNLIFKYVGTMEASEDAAFNKITRSLQDLQQKDIGVKPEFSFNIPRAKRELAQLNKCTSPQQKLVCLRKVVQLITQSPSQRVNLETMCADDLLSVLLYLLVKTEIPNWMANLSYIKNFRFSSLAKDELGYCLTSFEAAIEYIRQGSLSAKPPESEGFGDRLFLKQRMSLLSQMTSSPTDCLFKHIASGNQKEVERLLSQEDHDKDTVQKMCHPLCFCDDCEKLVSGRLNDPSVVTPFSRDDRGHTPLHVAAVCGQASLIDLLVSKGAMVNATDYHGATPLHLACQKGYQSVTLLLLHYKASAEVQDNNGNTPLHLACTYGHEDCVKALVYYDVESCRLDIGNEKGDTPLHIAARWGYQGVIETLLQNGASTEIQNRLKETPLKCALNSKILSVMEAYHLSFERRQKSSEAPVQSPQRSVDSISQESSTSSFSSMSASSRQEETKKDYREVEKLLRAVADGDLEMVRYLLEWTEEDLEDAEDTVSAADPEFCHPLCQCPKCAPAQKRLAKVPASGLGVNVTSQDGSSPLHVAALHGRADLIPLLLKHGANAGARNADQAVPLHLACQQGHFQVVKCLLDSNAKPNKKDLSGNTPLIYACSGGHHELVALLLQHGASINASNNKGNTALHEAVIEKHVFVVELLLLHGASVQVLNKRQRTAVDCAEQNSKIMELLQVVPSCVASLDDVAETDRKEYVTVKIRKKWNSKLYDLPDEPFTRQFYFVHSAGQFKGKTSREIMARDRSVPNLTEGSLHEPGRQSVTLRQNNLPAQSGSHAAEKGNSDWPERPGLTQTGPGHRRMLRRHTVEDAVVSQGPEAAGPLSTPQEVSASRS</sequence>
<comment type="function">
    <text evidence="1 10 11 13 14 15">May be a guanine exchange factor (GEF) for Rab21, Rab32 and Rab38 and regulate endosome dynamics (PubMed:16525121, PubMed:18477474). May regulate the participation of VAMP7 in membrane fusion events; in vitro inhibits VAMP7-mediated SNARE complex formation by trapping VAMP7 in a closed, fusogenically inactive conformation (PubMed:23104059). Involved in peripheral melanosomal distribution of TYRP1 in melanocytes; the function, which probably is implicating vesicle-trafficking, includes cooperation with Rab32, Rab38 and VAMP7 (By similarity). Involved in the regulation of neurite growth; the function seems to require its GEF activity, probably towards Rab21, and VAMP7 but not Rab32/38 (By similarity). Proposed to be involved in Golgi sorting of VAMP7 and transport of VAMP7 vesicles to the cell surface; the function seems to implicate kinesin heavy chain isoform 5 proteins, GOLGA4, RAB21 and MACF1 (PubMed:22705394). Required for the colocalization of VAMP7 and Rab21, probably on TGN sites (PubMed:19745841). Involved in GLUT1 endosome-to-plasma membrane trafficking; the function is dependent of association with VPS29 (PubMed:24856514). Regulates the proper trafficking of melanogenic enzymes TYR, TYRP1 and DCT/TYRP2 to melanosomes in melanocytes (By similarity).</text>
</comment>
<comment type="subunit">
    <text evidence="5 6 7 8 9 10 11">Interacts with RAB21 (GDP-bound form), VPS29, RAB32 (GTP-bound form), RAB38 (GTP-bound form), VAMP7, KIF5A, KIF5C, GOLGA4. Interacts with low affinity with RAB5. ANKRD27:RAB32 heterodimers can homodimerize to form tetramers. Can interact with RAB38 or RAB32, VPS29 and VAMP7 simultaneously (PubMed:16525121, PubMed:18477474, PubMed:19745841, PubMed:21808068, PubMed:22705394, PubMed:23104059, PubMed:24856514). A decreased interaction with RAB32 seen in the presence of SGSM2 (PubMed:21808068).</text>
</comment>
<comment type="interaction">
    <interactant intactId="EBI-6125599">
        <id>Q96NW4</id>
    </interactant>
    <interactant intactId="EBI-1037845">
        <id>Q13439</id>
        <label>GOLGA4</label>
    </interactant>
    <organismsDiffer>false</organismsDiffer>
    <experiments>2</experiments>
</comment>
<comment type="interaction">
    <interactant intactId="EBI-6125599">
        <id>Q96NW4</id>
    </interactant>
    <interactant intactId="EBI-713468">
        <id>Q12840</id>
        <label>KIF5A</label>
    </interactant>
    <organismsDiffer>false</organismsDiffer>
    <experiments>4</experiments>
</comment>
<comment type="interaction">
    <interactant intactId="EBI-6125599">
        <id>Q96NW4</id>
    </interactant>
    <interactant intactId="EBI-349710">
        <id>P33175</id>
        <label>Kif5a</label>
    </interactant>
    <organismsDiffer>true</organismsDiffer>
    <experiments>2</experiments>
</comment>
<comment type="interaction">
    <interactant intactId="EBI-6125599">
        <id>Q96NW4</id>
    </interactant>
    <interactant intactId="EBI-6555653">
        <id>P70280</id>
        <label>Vamp7</label>
    </interactant>
    <organismsDiffer>true</organismsDiffer>
    <experiments>13</experiments>
</comment>
<comment type="interaction">
    <interactant intactId="EBI-6125599">
        <id>Q96NW4</id>
    </interactant>
    <interactant intactId="EBI-919936">
        <id>Q9JHW5</id>
        <label>Vamp7</label>
    </interactant>
    <organismsDiffer>true</organismsDiffer>
    <experiments>4</experiments>
</comment>
<comment type="subcellular location">
    <subcellularLocation>
        <location evidence="5 11">Early endosome</location>
    </subcellularLocation>
    <subcellularLocation>
        <location evidence="10">Late endosome</location>
    </subcellularLocation>
    <subcellularLocation>
        <location evidence="10">Cytoplasmic vesicle membrane</location>
    </subcellularLocation>
    <subcellularLocation>
        <location evidence="10">Lysosome</location>
    </subcellularLocation>
    <subcellularLocation>
        <location evidence="10">Cell membrane</location>
    </subcellularLocation>
    <subcellularLocation>
        <location evidence="1">Melanosome</location>
    </subcellularLocation>
    <text evidence="1">Colocalizes with VAMP7 in transport vesicles in the shaft of hippocampal neurons (By similarity).</text>
</comment>
<comment type="sequence caution" evidence="12">
    <conflict type="erroneous initiation">
        <sequence resource="EMBL-CDS" id="BAB70755"/>
    </conflict>
</comment>